<organism>
    <name type="scientific">Euglena gracilis</name>
    <dbReference type="NCBI Taxonomy" id="3039"/>
    <lineage>
        <taxon>Eukaryota</taxon>
        <taxon>Discoba</taxon>
        <taxon>Euglenozoa</taxon>
        <taxon>Euglenida</taxon>
        <taxon>Spirocuta</taxon>
        <taxon>Euglenophyceae</taxon>
        <taxon>Euglenales</taxon>
        <taxon>Euglenaceae</taxon>
        <taxon>Euglena</taxon>
    </lineage>
</organism>
<gene>
    <name type="primary">rps9</name>
</gene>
<sequence>MKLNSIEVIGKRKSSIAKIILFLPKDGGGEILINGEKAFNYLQNNLRTLKVVCSPFELLNINNYKVHAYVKGGGLSGQADAIKLAISKSLSVFIEKEDKKKLKVNGFLTRNSLCKERRKYGLKKARKAPQFSKR</sequence>
<accession>P32060</accession>
<feature type="chain" id="PRO_0000111453" description="Small ribosomal subunit protein uS9c">
    <location>
        <begin position="1"/>
        <end position="134"/>
    </location>
</feature>
<evidence type="ECO:0000305" key="1"/>
<comment type="subcellular location">
    <subcellularLocation>
        <location>Plastid</location>
        <location>Chloroplast</location>
    </subcellularLocation>
</comment>
<comment type="similarity">
    <text evidence="1">Belongs to the universal ribosomal protein uS9 family.</text>
</comment>
<keyword id="KW-0150">Chloroplast</keyword>
<keyword id="KW-0934">Plastid</keyword>
<keyword id="KW-0687">Ribonucleoprotein</keyword>
<keyword id="KW-0689">Ribosomal protein</keyword>
<dbReference type="EMBL" id="Z11874">
    <property type="status" value="NOT_ANNOTATED_CDS"/>
    <property type="molecule type" value="Genomic_DNA"/>
</dbReference>
<dbReference type="EMBL" id="X70810">
    <property type="protein sequence ID" value="CAA50120.1"/>
    <property type="molecule type" value="Genomic_DNA"/>
</dbReference>
<dbReference type="RefSeq" id="NP_041933.1">
    <property type="nucleotide sequence ID" value="NC_001603.2"/>
</dbReference>
<dbReference type="SMR" id="P32060"/>
<dbReference type="GeneID" id="807491"/>
<dbReference type="GO" id="GO:0009507">
    <property type="term" value="C:chloroplast"/>
    <property type="evidence" value="ECO:0007669"/>
    <property type="project" value="UniProtKB-SubCell"/>
</dbReference>
<dbReference type="GO" id="GO:0015935">
    <property type="term" value="C:small ribosomal subunit"/>
    <property type="evidence" value="ECO:0007669"/>
    <property type="project" value="TreeGrafter"/>
</dbReference>
<dbReference type="GO" id="GO:0003723">
    <property type="term" value="F:RNA binding"/>
    <property type="evidence" value="ECO:0007669"/>
    <property type="project" value="TreeGrafter"/>
</dbReference>
<dbReference type="GO" id="GO:0003735">
    <property type="term" value="F:structural constituent of ribosome"/>
    <property type="evidence" value="ECO:0007669"/>
    <property type="project" value="InterPro"/>
</dbReference>
<dbReference type="GO" id="GO:0006412">
    <property type="term" value="P:translation"/>
    <property type="evidence" value="ECO:0007669"/>
    <property type="project" value="UniProtKB-UniRule"/>
</dbReference>
<dbReference type="Gene3D" id="3.30.230.10">
    <property type="match status" value="1"/>
</dbReference>
<dbReference type="HAMAP" id="MF_00532_B">
    <property type="entry name" value="Ribosomal_uS9_B"/>
    <property type="match status" value="1"/>
</dbReference>
<dbReference type="InterPro" id="IPR020568">
    <property type="entry name" value="Ribosomal_Su5_D2-typ_SF"/>
</dbReference>
<dbReference type="InterPro" id="IPR000754">
    <property type="entry name" value="Ribosomal_uS9"/>
</dbReference>
<dbReference type="InterPro" id="IPR023035">
    <property type="entry name" value="Ribosomal_uS9_bac/plastid"/>
</dbReference>
<dbReference type="InterPro" id="IPR020574">
    <property type="entry name" value="Ribosomal_uS9_CS"/>
</dbReference>
<dbReference type="InterPro" id="IPR014721">
    <property type="entry name" value="Ribsml_uS5_D2-typ_fold_subgr"/>
</dbReference>
<dbReference type="NCBIfam" id="NF001099">
    <property type="entry name" value="PRK00132.1"/>
    <property type="match status" value="1"/>
</dbReference>
<dbReference type="PANTHER" id="PTHR21569">
    <property type="entry name" value="RIBOSOMAL PROTEIN S9"/>
    <property type="match status" value="1"/>
</dbReference>
<dbReference type="PANTHER" id="PTHR21569:SF1">
    <property type="entry name" value="SMALL RIBOSOMAL SUBUNIT PROTEIN US9M"/>
    <property type="match status" value="1"/>
</dbReference>
<dbReference type="Pfam" id="PF00380">
    <property type="entry name" value="Ribosomal_S9"/>
    <property type="match status" value="1"/>
</dbReference>
<dbReference type="SUPFAM" id="SSF54211">
    <property type="entry name" value="Ribosomal protein S5 domain 2-like"/>
    <property type="match status" value="1"/>
</dbReference>
<dbReference type="PROSITE" id="PS00360">
    <property type="entry name" value="RIBOSOMAL_S9"/>
    <property type="match status" value="1"/>
</dbReference>
<geneLocation type="chloroplast"/>
<proteinExistence type="inferred from homology"/>
<reference key="1">
    <citation type="journal article" date="1993" name="Nucleic Acids Res.">
        <title>Complete sequence of Euglena gracilis chloroplast DNA.</title>
        <authorList>
            <person name="Hallick R.B."/>
            <person name="Hong L."/>
            <person name="Drager R.G."/>
            <person name="Favreau M.R."/>
            <person name="Monfort A."/>
            <person name="Orsat B."/>
            <person name="Spielmann A."/>
            <person name="Stutz E."/>
        </authorList>
    </citation>
    <scope>NUCLEOTIDE SEQUENCE [LARGE SCALE GENOMIC DNA]</scope>
</reference>
<protein>
    <recommendedName>
        <fullName evidence="1">Small ribosomal subunit protein uS9c</fullName>
    </recommendedName>
    <alternativeName>
        <fullName>30S ribosomal protein S9, chloroplastic</fullName>
    </alternativeName>
</protein>
<name>RR9_EUGGR</name>